<reference key="1">
    <citation type="submission" date="2009-06" db="EMBL/GenBank/DDBJ databases">
        <title>Complete sequence of chromosome of Geopacillus sp. WCH70.</title>
        <authorList>
            <consortium name="US DOE Joint Genome Institute"/>
            <person name="Lucas S."/>
            <person name="Copeland A."/>
            <person name="Lapidus A."/>
            <person name="Glavina del Rio T."/>
            <person name="Dalin E."/>
            <person name="Tice H."/>
            <person name="Bruce D."/>
            <person name="Goodwin L."/>
            <person name="Pitluck S."/>
            <person name="Chertkov O."/>
            <person name="Brettin T."/>
            <person name="Detter J.C."/>
            <person name="Han C."/>
            <person name="Larimer F."/>
            <person name="Land M."/>
            <person name="Hauser L."/>
            <person name="Kyrpides N."/>
            <person name="Mikhailova N."/>
            <person name="Brumm P."/>
            <person name="Mead D.A."/>
            <person name="Richardson P."/>
        </authorList>
    </citation>
    <scope>NUCLEOTIDE SEQUENCE [LARGE SCALE GENOMIC DNA]</scope>
    <source>
        <strain>WCH70</strain>
    </source>
</reference>
<comment type="similarity">
    <text evidence="1">Belongs to the UPF0309 family.</text>
</comment>
<organism>
    <name type="scientific">Geobacillus sp. (strain WCH70)</name>
    <dbReference type="NCBI Taxonomy" id="471223"/>
    <lineage>
        <taxon>Bacteria</taxon>
        <taxon>Bacillati</taxon>
        <taxon>Bacillota</taxon>
        <taxon>Bacilli</taxon>
        <taxon>Bacillales</taxon>
        <taxon>Anoxybacillaceae</taxon>
        <taxon>Geobacillus</taxon>
    </lineage>
</organism>
<feature type="chain" id="PRO_1000214076" description="UPF0309 protein GWCH70_1414">
    <location>
        <begin position="1"/>
        <end position="247"/>
    </location>
</feature>
<feature type="domain" description="SIS" evidence="1">
    <location>
        <begin position="31"/>
        <end position="214"/>
    </location>
</feature>
<accession>C5DAC8</accession>
<evidence type="ECO:0000255" key="1">
    <source>
        <dbReference type="HAMAP-Rule" id="MF_01240"/>
    </source>
</evidence>
<gene>
    <name type="ordered locus">GWCH70_1414</name>
</gene>
<protein>
    <recommendedName>
        <fullName evidence="1">UPF0309 protein GWCH70_1414</fullName>
    </recommendedName>
</protein>
<dbReference type="EMBL" id="CP001638">
    <property type="protein sequence ID" value="ACS24242.1"/>
    <property type="molecule type" value="Genomic_DNA"/>
</dbReference>
<dbReference type="SMR" id="C5DAC8"/>
<dbReference type="STRING" id="471223.GWCH70_1414"/>
<dbReference type="KEGG" id="gwc:GWCH70_1414"/>
<dbReference type="eggNOG" id="COG4821">
    <property type="taxonomic scope" value="Bacteria"/>
</dbReference>
<dbReference type="HOGENOM" id="CLU_089975_0_0_9"/>
<dbReference type="OrthoDB" id="9805185at2"/>
<dbReference type="GO" id="GO:0097367">
    <property type="term" value="F:carbohydrate derivative binding"/>
    <property type="evidence" value="ECO:0007669"/>
    <property type="project" value="InterPro"/>
</dbReference>
<dbReference type="GO" id="GO:1901135">
    <property type="term" value="P:carbohydrate derivative metabolic process"/>
    <property type="evidence" value="ECO:0007669"/>
    <property type="project" value="InterPro"/>
</dbReference>
<dbReference type="CDD" id="cd05013">
    <property type="entry name" value="SIS_RpiR"/>
    <property type="match status" value="1"/>
</dbReference>
<dbReference type="Gene3D" id="3.40.50.10490">
    <property type="entry name" value="Glucose-6-phosphate isomerase like protein, domain 1"/>
    <property type="match status" value="1"/>
</dbReference>
<dbReference type="HAMAP" id="MF_01240">
    <property type="entry name" value="UPF0309"/>
    <property type="match status" value="1"/>
</dbReference>
<dbReference type="InterPro" id="IPR035472">
    <property type="entry name" value="RpiR-like_SIS"/>
</dbReference>
<dbReference type="InterPro" id="IPR001347">
    <property type="entry name" value="SIS_dom"/>
</dbReference>
<dbReference type="InterPro" id="IPR046348">
    <property type="entry name" value="SIS_dom_sf"/>
</dbReference>
<dbReference type="InterPro" id="IPR050099">
    <property type="entry name" value="SIS_GmhA/DiaA_subfam"/>
</dbReference>
<dbReference type="InterPro" id="IPR022951">
    <property type="entry name" value="UPF0309"/>
</dbReference>
<dbReference type="NCBIfam" id="NF002805">
    <property type="entry name" value="PRK02947.1"/>
    <property type="match status" value="1"/>
</dbReference>
<dbReference type="PANTHER" id="PTHR30390:SF7">
    <property type="entry name" value="PHOSPHOHEPTOSE ISOMERASE"/>
    <property type="match status" value="1"/>
</dbReference>
<dbReference type="PANTHER" id="PTHR30390">
    <property type="entry name" value="SEDOHEPTULOSE 7-PHOSPHATE ISOMERASE / DNAA INITIATOR-ASSOCIATING FACTOR FOR REPLICATION INITIATION"/>
    <property type="match status" value="1"/>
</dbReference>
<dbReference type="Pfam" id="PF13580">
    <property type="entry name" value="SIS_2"/>
    <property type="match status" value="1"/>
</dbReference>
<dbReference type="SUPFAM" id="SSF53697">
    <property type="entry name" value="SIS domain"/>
    <property type="match status" value="1"/>
</dbReference>
<dbReference type="PROSITE" id="PS51464">
    <property type="entry name" value="SIS"/>
    <property type="match status" value="1"/>
</dbReference>
<proteinExistence type="inferred from homology"/>
<sequence>MIERYFQKVNERLELVLKNERENLKKAAYVVSEAIQKGGIIQLFGCGHSHILTEEVFYRAGGLVPIKPIFFEPLMLHEGAVRSSMLERINDLAHEFMADEDIRREDVFFVLSTSGRNPVPIDVALTAKNKGAYTIVITSLEYSMSQPSRHKSGKLLYEVADLVINNYSVKGDAILSHESVSVPFSPTSTVVGCTILNAIFAEAIVLMAENGFEPPIFLSGNIEGADDHNNKIIEKYKDRIPILIGKS</sequence>
<name>Y1414_GEOSW</name>